<name>PG044_MONPV</name>
<accession>A0A7H0DN17</accession>
<gene>
    <name type="primary">OPG044</name>
    <name type="ORF">MPXVgp032</name>
</gene>
<protein>
    <recommendedName>
        <fullName>Protein K7</fullName>
    </recommendedName>
</protein>
<comment type="function">
    <text evidence="1">Virulence factor that affects the acute immune response to infection. Bcl-2-like protein which, through its interaction with the DEAD box RNA helicase DDX3X/DDX3, prevents TBK1/IKKepsilon-mediated IRF3 activation. Contributes to virulence by binding to the host TRAF6 and IRAK2 and preventing host NF-kappa-B activation.</text>
</comment>
<comment type="subunit">
    <text evidence="1">Interacts with DDX3; this interaction inhibits DDX3 and suppresses DDX3-mediated IFN-beta promoter induction. Interacts with TRAF6 and IRAK2; these interactions suppress TLR-dependent NF-KappaB activation.</text>
</comment>
<comment type="subcellular location">
    <subcellularLocation>
        <location evidence="1">Host cytoplasm</location>
    </subcellularLocation>
</comment>
<comment type="induction">
    <text evidence="1">Expressed in the early phase of the viral replicative cycle.</text>
</comment>
<comment type="similarity">
    <text evidence="2">Belongs to the orthopoxvirus OPG044 family.</text>
</comment>
<organismHost>
    <name type="scientific">Cynomys gunnisoni</name>
    <name type="common">Gunnison's prairie dog</name>
    <name type="synonym">Spermophilus gunnisoni</name>
    <dbReference type="NCBI Taxonomy" id="45479"/>
</organismHost>
<organismHost>
    <name type="scientific">Cynomys leucurus</name>
    <name type="common">White-tailed prairie dog</name>
    <dbReference type="NCBI Taxonomy" id="99825"/>
</organismHost>
<organismHost>
    <name type="scientific">Cynomys ludovicianus</name>
    <name type="common">Black-tailed prairie dog</name>
    <dbReference type="NCBI Taxonomy" id="45480"/>
</organismHost>
<organismHost>
    <name type="scientific">Cynomys mexicanus</name>
    <name type="common">Mexican prairie dog</name>
    <dbReference type="NCBI Taxonomy" id="99826"/>
</organismHost>
<organismHost>
    <name type="scientific">Cynomys parvidens</name>
    <name type="common">Utah prairie dog</name>
    <dbReference type="NCBI Taxonomy" id="99827"/>
</organismHost>
<organismHost>
    <name type="scientific">Gliridae</name>
    <name type="common">dormice</name>
    <dbReference type="NCBI Taxonomy" id="30650"/>
</organismHost>
<organismHost>
    <name type="scientific">Heliosciurus ruwenzorii</name>
    <name type="common">Ruwenzori sun squirrel</name>
    <dbReference type="NCBI Taxonomy" id="226685"/>
</organismHost>
<organismHost>
    <name type="scientific">Homo sapiens</name>
    <name type="common">Human</name>
    <dbReference type="NCBI Taxonomy" id="9606"/>
</organismHost>
<organismHost>
    <name type="scientific">Mus musculus</name>
    <name type="common">Mouse</name>
    <dbReference type="NCBI Taxonomy" id="10090"/>
</organismHost>
<proteinExistence type="inferred from homology"/>
<organism>
    <name type="scientific">Monkeypox virus</name>
    <dbReference type="NCBI Taxonomy" id="10244"/>
    <lineage>
        <taxon>Viruses</taxon>
        <taxon>Varidnaviria</taxon>
        <taxon>Bamfordvirae</taxon>
        <taxon>Nucleocytoviricota</taxon>
        <taxon>Pokkesviricetes</taxon>
        <taxon>Chitovirales</taxon>
        <taxon>Poxviridae</taxon>
        <taxon>Chordopoxvirinae</taxon>
        <taxon>Orthopoxvirus</taxon>
    </lineage>
</organism>
<dbReference type="EMBL" id="MT903340">
    <property type="protein sequence ID" value="QNP12900.1"/>
    <property type="molecule type" value="Genomic_DNA"/>
</dbReference>
<dbReference type="RefSeq" id="YP_010377027.1">
    <property type="nucleotide sequence ID" value="NC_063383.1"/>
</dbReference>
<dbReference type="SMR" id="A0A7H0DN17"/>
<dbReference type="GeneID" id="72551440"/>
<dbReference type="Proteomes" id="UP000516359">
    <property type="component" value="Genome"/>
</dbReference>
<dbReference type="GO" id="GO:0030430">
    <property type="term" value="C:host cell cytoplasm"/>
    <property type="evidence" value="ECO:0007669"/>
    <property type="project" value="UniProtKB-SubCell"/>
</dbReference>
<dbReference type="GO" id="GO:0052170">
    <property type="term" value="P:symbiont-mediated suppression of host innate immune response"/>
    <property type="evidence" value="ECO:0007669"/>
    <property type="project" value="UniProtKB-KW"/>
</dbReference>
<dbReference type="GO" id="GO:0085034">
    <property type="term" value="P:symbiont-mediated suppression of host NF-kappaB cascade"/>
    <property type="evidence" value="ECO:0007669"/>
    <property type="project" value="UniProtKB-KW"/>
</dbReference>
<dbReference type="Gene3D" id="1.10.437.20">
    <property type="entry name" value="dsDNA poxvirus"/>
    <property type="match status" value="1"/>
</dbReference>
<dbReference type="InterPro" id="IPR009174">
    <property type="entry name" value="Orthopox_K7"/>
</dbReference>
<dbReference type="InterPro" id="IPR022819">
    <property type="entry name" value="Poxvirus_Bcl-2-like"/>
</dbReference>
<dbReference type="InterPro" id="IPR043018">
    <property type="entry name" value="Poxvirus_sf"/>
</dbReference>
<dbReference type="Pfam" id="PF06227">
    <property type="entry name" value="Poxv_Bcl-2-like"/>
    <property type="match status" value="1"/>
</dbReference>
<dbReference type="PIRSF" id="PIRSF003764">
    <property type="entry name" value="VAC_K7R"/>
    <property type="match status" value="1"/>
</dbReference>
<reference key="1">
    <citation type="journal article" date="2022" name="J. Infect. Dis.">
        <title>Exportation of Monkeypox virus from the African continent.</title>
        <authorList>
            <person name="Mauldin M.R."/>
            <person name="McCollum A.M."/>
            <person name="Nakazawa Y.J."/>
            <person name="Mandra A."/>
            <person name="Whitehouse E.R."/>
            <person name="Davidson W."/>
            <person name="Zhao H."/>
            <person name="Gao J."/>
            <person name="Li Y."/>
            <person name="Doty J."/>
            <person name="Yinka-Ogunleye A."/>
            <person name="Akinpelu A."/>
            <person name="Aruna O."/>
            <person name="Naidoo D."/>
            <person name="Lewandowski K."/>
            <person name="Afrough B."/>
            <person name="Graham V."/>
            <person name="Aarons E."/>
            <person name="Hewson R."/>
            <person name="Vipond R."/>
            <person name="Dunning J."/>
            <person name="Chand M."/>
            <person name="Brown C."/>
            <person name="Cohen-Gihon I."/>
            <person name="Erez N."/>
            <person name="Shifman O."/>
            <person name="Israeli O."/>
            <person name="Sharon M."/>
            <person name="Schwartz E."/>
            <person name="Beth-Din A."/>
            <person name="Zvi A."/>
            <person name="Mak T.M."/>
            <person name="Ng Y.K."/>
            <person name="Cui L."/>
            <person name="Lin R.T.P."/>
            <person name="Olson V.A."/>
            <person name="Brooks T."/>
            <person name="Paran N."/>
            <person name="Ihekweazu C."/>
            <person name="Reynolds M.G."/>
        </authorList>
    </citation>
    <scope>NUCLEOTIDE SEQUENCE [LARGE SCALE GENOMIC DNA]</scope>
    <source>
        <strain>MPXV-M5312_HM12_Rivers</strain>
    </source>
</reference>
<keyword id="KW-1035">Host cytoplasm</keyword>
<keyword id="KW-0945">Host-virus interaction</keyword>
<keyword id="KW-1090">Inhibition of host innate immune response by virus</keyword>
<keyword id="KW-1100">Inhibition of host NF-kappa-B by virus</keyword>
<keyword id="KW-1113">Inhibition of host RLR pathway by virus</keyword>
<keyword id="KW-1185">Reference proteome</keyword>
<keyword id="KW-0899">Viral immunoevasion</keyword>
<evidence type="ECO:0000250" key="1">
    <source>
        <dbReference type="UniProtKB" id="P68466"/>
    </source>
</evidence>
<evidence type="ECO:0000305" key="2"/>
<feature type="chain" id="PRO_0000457207" description="Protein K7">
    <location>
        <begin position="1"/>
        <end position="149"/>
    </location>
</feature>
<sequence>METKSDYEDAVFYFVDDDEICSRDSIIDLIDEYITWRNHVIVFNKDITSCGRLYKELIKFDDVAIRYYGIDKINEIVEAMSEGDHYINLTEVHDQESLFATIGICAKITEHWGYKKISESKFQSLGNITDLMTDDNINILILFLEKKMN</sequence>